<keyword id="KW-0472">Membrane</keyword>
<keyword id="KW-0496">Mitochondrion</keyword>
<keyword id="KW-0999">Mitochondrion inner membrane</keyword>
<keyword id="KW-1185">Reference proteome</keyword>
<keyword id="KW-0809">Transit peptide</keyword>
<keyword id="KW-0812">Transmembrane</keyword>
<keyword id="KW-1133">Transmembrane helix</keyword>
<evidence type="ECO:0000255" key="1"/>
<evidence type="ECO:0000269" key="2">
    <source>
    </source>
</evidence>
<evidence type="ECO:0000269" key="3">
    <source>
    </source>
</evidence>
<evidence type="ECO:0000269" key="4">
    <source>
    </source>
</evidence>
<evidence type="ECO:0000269" key="5">
    <source>
    </source>
</evidence>
<evidence type="ECO:0000305" key="6"/>
<dbReference type="EMBL" id="U00030">
    <property type="protein sequence ID" value="AAB68358.1"/>
    <property type="molecule type" value="Genomic_DNA"/>
</dbReference>
<dbReference type="EMBL" id="BK006934">
    <property type="protein sequence ID" value="DAA06886.1"/>
    <property type="molecule type" value="Genomic_DNA"/>
</dbReference>
<dbReference type="PIR" id="S46680">
    <property type="entry name" value="S46680"/>
</dbReference>
<dbReference type="RefSeq" id="NP_012064.1">
    <property type="nucleotide sequence ID" value="NM_001179325.1"/>
</dbReference>
<dbReference type="BioGRID" id="36628">
    <property type="interactions" value="112"/>
</dbReference>
<dbReference type="DIP" id="DIP-2828N"/>
<dbReference type="FunCoup" id="P38880">
    <property type="interactions" value="53"/>
</dbReference>
<dbReference type="IntAct" id="P38880">
    <property type="interactions" value="2"/>
</dbReference>
<dbReference type="MINT" id="P38880"/>
<dbReference type="STRING" id="4932.YHR194W"/>
<dbReference type="PaxDb" id="4932-YHR194W"/>
<dbReference type="PeptideAtlas" id="P38880"/>
<dbReference type="EnsemblFungi" id="YHR194W_mRNA">
    <property type="protein sequence ID" value="YHR194W"/>
    <property type="gene ID" value="YHR194W"/>
</dbReference>
<dbReference type="GeneID" id="856601"/>
<dbReference type="KEGG" id="sce:YHR194W"/>
<dbReference type="AGR" id="SGD:S000001237"/>
<dbReference type="SGD" id="S000001237">
    <property type="gene designation" value="MDM31"/>
</dbReference>
<dbReference type="VEuPathDB" id="FungiDB:YHR194W"/>
<dbReference type="eggNOG" id="ENOG502QQJG">
    <property type="taxonomic scope" value="Eukaryota"/>
</dbReference>
<dbReference type="GeneTree" id="ENSGT00940000176498"/>
<dbReference type="HOGENOM" id="CLU_016236_2_1_1"/>
<dbReference type="InParanoid" id="P38880"/>
<dbReference type="OMA" id="DFLCAEN"/>
<dbReference type="OrthoDB" id="17678at2759"/>
<dbReference type="BioCyc" id="YEAST:G3O-31222-MONOMER"/>
<dbReference type="BioGRID-ORCS" id="856601">
    <property type="hits" value="2 hits in 10 CRISPR screens"/>
</dbReference>
<dbReference type="PRO" id="PR:P38880"/>
<dbReference type="Proteomes" id="UP000002311">
    <property type="component" value="Chromosome VIII"/>
</dbReference>
<dbReference type="RNAct" id="P38880">
    <property type="molecule type" value="protein"/>
</dbReference>
<dbReference type="GO" id="GO:0005743">
    <property type="term" value="C:mitochondrial inner membrane"/>
    <property type="evidence" value="ECO:0000314"/>
    <property type="project" value="SGD"/>
</dbReference>
<dbReference type="GO" id="GO:0005634">
    <property type="term" value="C:nucleus"/>
    <property type="evidence" value="ECO:0007005"/>
    <property type="project" value="SGD"/>
</dbReference>
<dbReference type="GO" id="GO:0006873">
    <property type="term" value="P:intracellular monoatomic ion homeostasis"/>
    <property type="evidence" value="ECO:0000315"/>
    <property type="project" value="SGD"/>
</dbReference>
<dbReference type="GO" id="GO:0000001">
    <property type="term" value="P:mitochondrion inheritance"/>
    <property type="evidence" value="ECO:0000315"/>
    <property type="project" value="SGD"/>
</dbReference>
<dbReference type="GO" id="GO:0007005">
    <property type="term" value="P:mitochondrion organization"/>
    <property type="evidence" value="ECO:0000315"/>
    <property type="project" value="SGD"/>
</dbReference>
<dbReference type="GO" id="GO:1900208">
    <property type="term" value="P:regulation of cardiolipin metabolic process"/>
    <property type="evidence" value="ECO:0000316"/>
    <property type="project" value="SGD"/>
</dbReference>
<dbReference type="InterPro" id="IPR012571">
    <property type="entry name" value="Mdm31/Mdm32"/>
</dbReference>
<dbReference type="PANTHER" id="PTHR31068">
    <property type="entry name" value="MITOCHONDRIAL DISTRIBUTION AND MORPHOLOGY PROTEIN 31"/>
    <property type="match status" value="1"/>
</dbReference>
<dbReference type="PANTHER" id="PTHR31068:SF0">
    <property type="entry name" value="MITOCHONDRIAL DISTRIBUTION AND MORPHOLOGY PROTEIN 31"/>
    <property type="match status" value="1"/>
</dbReference>
<dbReference type="Pfam" id="PF08118">
    <property type="entry name" value="MDM31_MDM32"/>
    <property type="match status" value="1"/>
</dbReference>
<accession>P38880</accession>
<accession>D3DLE2</accession>
<gene>
    <name type="primary">MDM31</name>
    <name type="ordered locus">YHR194W</name>
</gene>
<name>MDM31_YEAST</name>
<reference key="1">
    <citation type="journal article" date="1994" name="Science">
        <title>Complete nucleotide sequence of Saccharomyces cerevisiae chromosome VIII.</title>
        <authorList>
            <person name="Johnston M."/>
            <person name="Andrews S."/>
            <person name="Brinkman R."/>
            <person name="Cooper J."/>
            <person name="Ding H."/>
            <person name="Dover J."/>
            <person name="Du Z."/>
            <person name="Favello A."/>
            <person name="Fulton L."/>
            <person name="Gattung S."/>
            <person name="Geisel C."/>
            <person name="Kirsten J."/>
            <person name="Kucaba T."/>
            <person name="Hillier L.W."/>
            <person name="Jier M."/>
            <person name="Johnston L."/>
            <person name="Langston Y."/>
            <person name="Latreille P."/>
            <person name="Louis E.J."/>
            <person name="Macri C."/>
            <person name="Mardis E."/>
            <person name="Menezes S."/>
            <person name="Mouser L."/>
            <person name="Nhan M."/>
            <person name="Rifkin L."/>
            <person name="Riles L."/>
            <person name="St Peter H."/>
            <person name="Trevaskis E."/>
            <person name="Vaughan K."/>
            <person name="Vignati D."/>
            <person name="Wilcox L."/>
            <person name="Wohldman P."/>
            <person name="Waterston R."/>
            <person name="Wilson R."/>
            <person name="Vaudin M."/>
        </authorList>
    </citation>
    <scope>NUCLEOTIDE SEQUENCE [LARGE SCALE GENOMIC DNA]</scope>
    <source>
        <strain>ATCC 204508 / S288c</strain>
    </source>
</reference>
<reference key="2">
    <citation type="journal article" date="2014" name="G3 (Bethesda)">
        <title>The reference genome sequence of Saccharomyces cerevisiae: Then and now.</title>
        <authorList>
            <person name="Engel S.R."/>
            <person name="Dietrich F.S."/>
            <person name="Fisk D.G."/>
            <person name="Binkley G."/>
            <person name="Balakrishnan R."/>
            <person name="Costanzo M.C."/>
            <person name="Dwight S.S."/>
            <person name="Hitz B.C."/>
            <person name="Karra K."/>
            <person name="Nash R.S."/>
            <person name="Weng S."/>
            <person name="Wong E.D."/>
            <person name="Lloyd P."/>
            <person name="Skrzypek M.S."/>
            <person name="Miyasato S.R."/>
            <person name="Simison M."/>
            <person name="Cherry J.M."/>
        </authorList>
    </citation>
    <scope>GENOME REANNOTATION</scope>
    <source>
        <strain>ATCC 204508 / S288c</strain>
    </source>
</reference>
<reference key="3">
    <citation type="journal article" date="2002" name="Mol. Biol. Cell">
        <title>Genetic basis of mitochondrial function and morphology in Saccharomyces cerevisiae.</title>
        <authorList>
            <person name="Dimmer K.S."/>
            <person name="Fritz S."/>
            <person name="Fuchs F."/>
            <person name="Messerschmitt M."/>
            <person name="Weinbach N."/>
            <person name="Neupert W."/>
            <person name="Westermann B."/>
        </authorList>
    </citation>
    <scope>FUNCTION</scope>
</reference>
<reference key="4">
    <citation type="journal article" date="2003" name="Nature">
        <title>Global analysis of protein localization in budding yeast.</title>
        <authorList>
            <person name="Huh W.-K."/>
            <person name="Falvo J.V."/>
            <person name="Gerke L.C."/>
            <person name="Carroll A.S."/>
            <person name="Howson R.W."/>
            <person name="Weissman J.S."/>
            <person name="O'Shea E.K."/>
        </authorList>
    </citation>
    <scope>SUBCELLULAR LOCATION [LARGE SCALE ANALYSIS]</scope>
</reference>
<reference key="5">
    <citation type="journal article" date="2003" name="Nature">
        <title>Global analysis of protein expression in yeast.</title>
        <authorList>
            <person name="Ghaemmaghami S."/>
            <person name="Huh W.-K."/>
            <person name="Bower K."/>
            <person name="Howson R.W."/>
            <person name="Belle A."/>
            <person name="Dephoure N."/>
            <person name="O'Shea E.K."/>
            <person name="Weissman J.S."/>
        </authorList>
    </citation>
    <scope>LEVEL OF PROTEIN EXPRESSION [LARGE SCALE ANALYSIS]</scope>
</reference>
<reference key="6">
    <citation type="journal article" date="2005" name="J. Cell Biol.">
        <title>Mdm31 and Mdm32 are inner membrane proteins required for maintenance of mitochondrial shape and stability of mitochondrial DNA nucleoids in yeast.</title>
        <authorList>
            <person name="Dimmer K.S."/>
            <person name="Jakobs S."/>
            <person name="Vogel F."/>
            <person name="Altmann K."/>
            <person name="Westermann B."/>
        </authorList>
    </citation>
    <scope>FUNCTION</scope>
    <scope>SUBCELLULAR LOCATION</scope>
    <scope>INTERACTION WITH MDM32</scope>
</reference>
<reference key="7">
    <citation type="journal article" date="2006" name="Proc. Natl. Acad. Sci. U.S.A.">
        <title>A global topology map of the Saccharomyces cerevisiae membrane proteome.</title>
        <authorList>
            <person name="Kim H."/>
            <person name="Melen K."/>
            <person name="Oesterberg M."/>
            <person name="von Heijne G."/>
        </authorList>
    </citation>
    <scope>TOPOLOGY [LARGE SCALE ANALYSIS]</scope>
    <source>
        <strain>ATCC 208353 / W303-1A</strain>
    </source>
</reference>
<sequence>MSLFTRPFLRSPRQFSVARYVYWARSPALRSNLRIPSIAAASLRAYSNESKTGRDAPPDKKSKKLSNLKYITERDSLLVQTNNIFTKLKINIRWFLKKSTRPFNSDDISAFISWILVSNIFIFIFWTTTFVSLILYLINTVFAQEYLASKIGKFITKNESLSIVFESAIVPDWSSGKISFQKVFVSRRPKVSRGFTKGSQQDALQRAKLALSERILVNQQDFDNGNYTQFDLTIDQVDISLNFRKWINGKGILDEVTINGLRGVIDRTHVVWKKDDDPKNYLNVYQPGDFEISKFTMNDVLCTLYQPNGFRPFQVSIFNCDLPQLRKHWLFYDILNANNINGTYDNSMFTIHKKFRTDDQHQDPTLLWKQMTRFRVDNLDIDHLNAGIEGPFGWINEGRVNMIGDVLLPDDDAASDSLQLTEILTEIGDRLIKKAKRYTSSLPLVGPGFSPAVDEIDPNDYFIMDFSLRLYNVKAEVPLFTSGLTYINSALIRPIVGYINSHRTYIPIKCRIVKKKSDFEGSWTIYDSYLMRDLSAEAYDAFADYVADDEKRTLRLRRVGFWSLQLILQVILMSLGAIA</sequence>
<organism>
    <name type="scientific">Saccharomyces cerevisiae (strain ATCC 204508 / S288c)</name>
    <name type="common">Baker's yeast</name>
    <dbReference type="NCBI Taxonomy" id="559292"/>
    <lineage>
        <taxon>Eukaryota</taxon>
        <taxon>Fungi</taxon>
        <taxon>Dikarya</taxon>
        <taxon>Ascomycota</taxon>
        <taxon>Saccharomycotina</taxon>
        <taxon>Saccharomycetes</taxon>
        <taxon>Saccharomycetales</taxon>
        <taxon>Saccharomycetaceae</taxon>
        <taxon>Saccharomyces</taxon>
    </lineage>
</organism>
<protein>
    <recommendedName>
        <fullName>Mitochondrial distribution and morphology protein 31</fullName>
    </recommendedName>
</protein>
<comment type="function">
    <text evidence="2 5">Involved in the organization of the mitochondrial membranes and the global structure of the mitochondria. Also required for mitochondrial distribution and mobility as well as for the maintenance of mitochondrial DNA nucleoids structures.</text>
</comment>
<comment type="subunit">
    <text evidence="5">Interacts with MDM32. Participates in a complex of about 600 kDa.</text>
</comment>
<comment type="subcellular location">
    <subcellularLocation>
        <location evidence="3 5">Mitochondrion inner membrane</location>
        <topology evidence="3 5">Multi-pass membrane protein</topology>
    </subcellularLocation>
</comment>
<comment type="miscellaneous">
    <text evidence="4">Present with 1200 molecules/cell in log phase SD medium.</text>
</comment>
<comment type="similarity">
    <text evidence="6">Belongs to the MDM31/MDM32 family.</text>
</comment>
<proteinExistence type="evidence at protein level"/>
<feature type="transit peptide" description="Mitochondrion" evidence="1">
    <location>
        <begin position="1"/>
        <end position="47"/>
    </location>
</feature>
<feature type="chain" id="PRO_0000021664" description="Mitochondrial distribution and morphology protein 31">
    <location>
        <begin position="48"/>
        <end position="579"/>
    </location>
</feature>
<feature type="topological domain" description="Mitochondrial matrix" evidence="1">
    <location>
        <begin position="48"/>
        <end position="114"/>
    </location>
</feature>
<feature type="transmembrane region" description="Helical" evidence="1">
    <location>
        <begin position="115"/>
        <end position="135"/>
    </location>
</feature>
<feature type="topological domain" description="Mitochondrial intermembrane" evidence="1">
    <location>
        <begin position="136"/>
        <end position="558"/>
    </location>
</feature>
<feature type="transmembrane region" description="Helical" evidence="1">
    <location>
        <begin position="559"/>
        <end position="578"/>
    </location>
</feature>
<feature type="topological domain" description="Mitochondrial matrix" evidence="1">
    <location>
        <position position="579"/>
    </location>
</feature>